<protein>
    <recommendedName>
        <fullName evidence="1">Large ribosomal subunit protein uL14</fullName>
    </recommendedName>
    <alternativeName>
        <fullName evidence="2">50S ribosomal protein L14</fullName>
    </alternativeName>
</protein>
<keyword id="KW-1185">Reference proteome</keyword>
<keyword id="KW-0687">Ribonucleoprotein</keyword>
<keyword id="KW-0689">Ribosomal protein</keyword>
<keyword id="KW-0694">RNA-binding</keyword>
<keyword id="KW-0699">rRNA-binding</keyword>
<name>RL14_ALLAM</name>
<reference key="1">
    <citation type="journal article" date="2009" name="J. Bacteriol.">
        <title>Genome sequences of three Agrobacterium biovars help elucidate the evolution of multichromosome genomes in bacteria.</title>
        <authorList>
            <person name="Slater S.C."/>
            <person name="Goldman B.S."/>
            <person name="Goodner B."/>
            <person name="Setubal J.C."/>
            <person name="Farrand S.K."/>
            <person name="Nester E.W."/>
            <person name="Burr T.J."/>
            <person name="Banta L."/>
            <person name="Dickerman A.W."/>
            <person name="Paulsen I."/>
            <person name="Otten L."/>
            <person name="Suen G."/>
            <person name="Welch R."/>
            <person name="Almeida N.F."/>
            <person name="Arnold F."/>
            <person name="Burton O.T."/>
            <person name="Du Z."/>
            <person name="Ewing A."/>
            <person name="Godsy E."/>
            <person name="Heisel S."/>
            <person name="Houmiel K.L."/>
            <person name="Jhaveri J."/>
            <person name="Lu J."/>
            <person name="Miller N.M."/>
            <person name="Norton S."/>
            <person name="Chen Q."/>
            <person name="Phoolcharoen W."/>
            <person name="Ohlin V."/>
            <person name="Ondrusek D."/>
            <person name="Pride N."/>
            <person name="Stricklin S.L."/>
            <person name="Sun J."/>
            <person name="Wheeler C."/>
            <person name="Wilson L."/>
            <person name="Zhu H."/>
            <person name="Wood D.W."/>
        </authorList>
    </citation>
    <scope>NUCLEOTIDE SEQUENCE [LARGE SCALE GENOMIC DNA]</scope>
    <source>
        <strain>ATCC BAA-846 / DSM 112012 / S4</strain>
    </source>
</reference>
<feature type="chain" id="PRO_1000166890" description="Large ribosomal subunit protein uL14">
    <location>
        <begin position="1"/>
        <end position="122"/>
    </location>
</feature>
<gene>
    <name evidence="1" type="primary">rplN</name>
    <name type="ordered locus">Avi_1850</name>
</gene>
<dbReference type="EMBL" id="CP000633">
    <property type="protein sequence ID" value="ACM36327.1"/>
    <property type="molecule type" value="Genomic_DNA"/>
</dbReference>
<dbReference type="RefSeq" id="WP_015915748.1">
    <property type="nucleotide sequence ID" value="NC_011989.1"/>
</dbReference>
<dbReference type="SMR" id="B9JVP7"/>
<dbReference type="STRING" id="311402.Avi_1850"/>
<dbReference type="GeneID" id="60682413"/>
<dbReference type="KEGG" id="avi:Avi_1850"/>
<dbReference type="eggNOG" id="COG0093">
    <property type="taxonomic scope" value="Bacteria"/>
</dbReference>
<dbReference type="HOGENOM" id="CLU_095071_2_1_5"/>
<dbReference type="Proteomes" id="UP000001596">
    <property type="component" value="Chromosome 1"/>
</dbReference>
<dbReference type="GO" id="GO:0022625">
    <property type="term" value="C:cytosolic large ribosomal subunit"/>
    <property type="evidence" value="ECO:0007669"/>
    <property type="project" value="TreeGrafter"/>
</dbReference>
<dbReference type="GO" id="GO:0070180">
    <property type="term" value="F:large ribosomal subunit rRNA binding"/>
    <property type="evidence" value="ECO:0007669"/>
    <property type="project" value="TreeGrafter"/>
</dbReference>
<dbReference type="GO" id="GO:0003735">
    <property type="term" value="F:structural constituent of ribosome"/>
    <property type="evidence" value="ECO:0007669"/>
    <property type="project" value="InterPro"/>
</dbReference>
<dbReference type="GO" id="GO:0006412">
    <property type="term" value="P:translation"/>
    <property type="evidence" value="ECO:0007669"/>
    <property type="project" value="UniProtKB-UniRule"/>
</dbReference>
<dbReference type="CDD" id="cd00337">
    <property type="entry name" value="Ribosomal_uL14"/>
    <property type="match status" value="1"/>
</dbReference>
<dbReference type="FunFam" id="2.40.150.20:FF:000001">
    <property type="entry name" value="50S ribosomal protein L14"/>
    <property type="match status" value="1"/>
</dbReference>
<dbReference type="Gene3D" id="2.40.150.20">
    <property type="entry name" value="Ribosomal protein L14"/>
    <property type="match status" value="1"/>
</dbReference>
<dbReference type="HAMAP" id="MF_01367">
    <property type="entry name" value="Ribosomal_uL14"/>
    <property type="match status" value="1"/>
</dbReference>
<dbReference type="InterPro" id="IPR000218">
    <property type="entry name" value="Ribosomal_uL14"/>
</dbReference>
<dbReference type="InterPro" id="IPR005745">
    <property type="entry name" value="Ribosomal_uL14_bac-type"/>
</dbReference>
<dbReference type="InterPro" id="IPR019972">
    <property type="entry name" value="Ribosomal_uL14_CS"/>
</dbReference>
<dbReference type="InterPro" id="IPR036853">
    <property type="entry name" value="Ribosomal_uL14_sf"/>
</dbReference>
<dbReference type="NCBIfam" id="TIGR01067">
    <property type="entry name" value="rplN_bact"/>
    <property type="match status" value="1"/>
</dbReference>
<dbReference type="PANTHER" id="PTHR11761">
    <property type="entry name" value="50S/60S RIBOSOMAL PROTEIN L14/L23"/>
    <property type="match status" value="1"/>
</dbReference>
<dbReference type="PANTHER" id="PTHR11761:SF3">
    <property type="entry name" value="LARGE RIBOSOMAL SUBUNIT PROTEIN UL14M"/>
    <property type="match status" value="1"/>
</dbReference>
<dbReference type="Pfam" id="PF00238">
    <property type="entry name" value="Ribosomal_L14"/>
    <property type="match status" value="1"/>
</dbReference>
<dbReference type="SMART" id="SM01374">
    <property type="entry name" value="Ribosomal_L14"/>
    <property type="match status" value="1"/>
</dbReference>
<dbReference type="SUPFAM" id="SSF50193">
    <property type="entry name" value="Ribosomal protein L14"/>
    <property type="match status" value="1"/>
</dbReference>
<dbReference type="PROSITE" id="PS00049">
    <property type="entry name" value="RIBOSOMAL_L14"/>
    <property type="match status" value="1"/>
</dbReference>
<proteinExistence type="inferred from homology"/>
<comment type="function">
    <text evidence="1">Binds to 23S rRNA. Forms part of two intersubunit bridges in the 70S ribosome.</text>
</comment>
<comment type="subunit">
    <text evidence="1">Part of the 50S ribosomal subunit. Forms a cluster with proteins L3 and L19. In the 70S ribosome, L14 and L19 interact and together make contacts with the 16S rRNA in bridges B5 and B8.</text>
</comment>
<comment type="similarity">
    <text evidence="1">Belongs to the universal ribosomal protein uL14 family.</text>
</comment>
<evidence type="ECO:0000255" key="1">
    <source>
        <dbReference type="HAMAP-Rule" id="MF_01367"/>
    </source>
</evidence>
<evidence type="ECO:0000305" key="2"/>
<accession>B9JVP7</accession>
<organism>
    <name type="scientific">Allorhizobium ampelinum (strain ATCC BAA-846 / DSM 112012 / S4)</name>
    <name type="common">Agrobacterium vitis (strain S4)</name>
    <dbReference type="NCBI Taxonomy" id="311402"/>
    <lineage>
        <taxon>Bacteria</taxon>
        <taxon>Pseudomonadati</taxon>
        <taxon>Pseudomonadota</taxon>
        <taxon>Alphaproteobacteria</taxon>
        <taxon>Hyphomicrobiales</taxon>
        <taxon>Rhizobiaceae</taxon>
        <taxon>Rhizobium/Agrobacterium group</taxon>
        <taxon>Allorhizobium</taxon>
        <taxon>Allorhizobium ampelinum</taxon>
    </lineage>
</organism>
<sequence length="122" mass="13392">MIQMQTNLDVADNSGARRVMCIKVLGGSKRKYASVGDIIVVSIKEAIPRGRVKKGDVMKAVVVRTAKDIRRADGSVIRFDNNAAVLIDNKKEPIGSRIFGPVPRELRAKNHMKIISLAPEVL</sequence>